<dbReference type="EC" id="2.7.11.1" evidence="2"/>
<dbReference type="EC" id="2.7.11.26" evidence="2"/>
<dbReference type="EMBL" id="M76545">
    <property type="protein sequence ID" value="AAA30453.1"/>
    <property type="molecule type" value="mRNA"/>
</dbReference>
<dbReference type="PIR" id="C56406">
    <property type="entry name" value="C56406"/>
</dbReference>
<dbReference type="RefSeq" id="XP_005221107.1">
    <property type="nucleotide sequence ID" value="XM_005221050.4"/>
</dbReference>
<dbReference type="SMR" id="P35508"/>
<dbReference type="FunCoup" id="P35508">
    <property type="interactions" value="5384"/>
</dbReference>
<dbReference type="STRING" id="9913.ENSBTAP00000059105"/>
<dbReference type="PaxDb" id="9913-ENSBTAP00000026621"/>
<dbReference type="Ensembl" id="ENSBTAT00000085293.2">
    <property type="protein sequence ID" value="ENSBTAP00000067662.2"/>
    <property type="gene ID" value="ENSBTAG00000019986.6"/>
</dbReference>
<dbReference type="GeneID" id="523542"/>
<dbReference type="VEuPathDB" id="HostDB:ENSBTAG00000019986"/>
<dbReference type="VGNC" id="VGNC:27766">
    <property type="gene designation" value="CSNK1D"/>
</dbReference>
<dbReference type="eggNOG" id="KOG1164">
    <property type="taxonomic scope" value="Eukaryota"/>
</dbReference>
<dbReference type="GeneTree" id="ENSGT00940000153536"/>
<dbReference type="InParanoid" id="P35508"/>
<dbReference type="OMA" id="IFDWTFL"/>
<dbReference type="OrthoDB" id="5800476at2759"/>
<dbReference type="TreeFam" id="TF300544"/>
<dbReference type="Reactome" id="R-BTA-204005">
    <property type="pathway name" value="COPII-mediated vesicle transport"/>
</dbReference>
<dbReference type="Reactome" id="R-BTA-2565942">
    <property type="pathway name" value="Regulation of PLK1 Activity at G2/M Transition"/>
</dbReference>
<dbReference type="Reactome" id="R-BTA-380259">
    <property type="pathway name" value="Loss of Nlp from mitotic centrosomes"/>
</dbReference>
<dbReference type="Reactome" id="R-BTA-380270">
    <property type="pathway name" value="Recruitment of mitotic centrosome proteins and complexes"/>
</dbReference>
<dbReference type="Reactome" id="R-BTA-380284">
    <property type="pathway name" value="Loss of proteins required for interphase microtubule organization from the centrosome"/>
</dbReference>
<dbReference type="Reactome" id="R-BTA-380320">
    <property type="pathway name" value="Recruitment of NuMA to mitotic centrosomes"/>
</dbReference>
<dbReference type="Reactome" id="R-BTA-5620912">
    <property type="pathway name" value="Anchoring of the basal body to the plasma membrane"/>
</dbReference>
<dbReference type="Reactome" id="R-BTA-6791226">
    <property type="pathway name" value="Major pathway of rRNA processing in the nucleolus and cytosol"/>
</dbReference>
<dbReference type="Reactome" id="R-BTA-8854518">
    <property type="pathway name" value="AURKA Activation by TPX2"/>
</dbReference>
<dbReference type="Proteomes" id="UP000009136">
    <property type="component" value="Chromosome 19"/>
</dbReference>
<dbReference type="Bgee" id="ENSBTAG00000019986">
    <property type="expression patterns" value="Expressed in myometrium and 105 other cell types or tissues"/>
</dbReference>
<dbReference type="GO" id="GO:0005813">
    <property type="term" value="C:centrosome"/>
    <property type="evidence" value="ECO:0007669"/>
    <property type="project" value="UniProtKB-SubCell"/>
</dbReference>
<dbReference type="GO" id="GO:0005737">
    <property type="term" value="C:cytoplasm"/>
    <property type="evidence" value="ECO:0000318"/>
    <property type="project" value="GO_Central"/>
</dbReference>
<dbReference type="GO" id="GO:0000139">
    <property type="term" value="C:Golgi membrane"/>
    <property type="evidence" value="ECO:0000314"/>
    <property type="project" value="AgBase"/>
</dbReference>
<dbReference type="GO" id="GO:0005634">
    <property type="term" value="C:nucleus"/>
    <property type="evidence" value="ECO:0000250"/>
    <property type="project" value="UniProtKB"/>
</dbReference>
<dbReference type="GO" id="GO:0048471">
    <property type="term" value="C:perinuclear region of cytoplasm"/>
    <property type="evidence" value="ECO:0007669"/>
    <property type="project" value="UniProtKB-SubCell"/>
</dbReference>
<dbReference type="GO" id="GO:0005886">
    <property type="term" value="C:plasma membrane"/>
    <property type="evidence" value="ECO:0007669"/>
    <property type="project" value="UniProtKB-SubCell"/>
</dbReference>
<dbReference type="GO" id="GO:0005876">
    <property type="term" value="C:spindle microtubule"/>
    <property type="evidence" value="ECO:0000318"/>
    <property type="project" value="GO_Central"/>
</dbReference>
<dbReference type="GO" id="GO:0005524">
    <property type="term" value="F:ATP binding"/>
    <property type="evidence" value="ECO:0007669"/>
    <property type="project" value="UniProtKB-KW"/>
</dbReference>
<dbReference type="GO" id="GO:0004672">
    <property type="term" value="F:protein kinase activity"/>
    <property type="evidence" value="ECO:0000250"/>
    <property type="project" value="UniProtKB"/>
</dbReference>
<dbReference type="GO" id="GO:0106310">
    <property type="term" value="F:protein serine kinase activity"/>
    <property type="evidence" value="ECO:0007669"/>
    <property type="project" value="RHEA"/>
</dbReference>
<dbReference type="GO" id="GO:0004674">
    <property type="term" value="F:protein serine/threonine kinase activity"/>
    <property type="evidence" value="ECO:0000314"/>
    <property type="project" value="AgBase"/>
</dbReference>
<dbReference type="GO" id="GO:0032922">
    <property type="term" value="P:circadian regulation of gene expression"/>
    <property type="evidence" value="ECO:0000250"/>
    <property type="project" value="UniProtKB"/>
</dbReference>
<dbReference type="GO" id="GO:0006897">
    <property type="term" value="P:endocytosis"/>
    <property type="evidence" value="ECO:0000318"/>
    <property type="project" value="GO_Central"/>
</dbReference>
<dbReference type="GO" id="GO:1905515">
    <property type="term" value="P:non-motile cilium assembly"/>
    <property type="evidence" value="ECO:0000318"/>
    <property type="project" value="GO_Central"/>
</dbReference>
<dbReference type="GO" id="GO:0018105">
    <property type="term" value="P:peptidyl-serine phosphorylation"/>
    <property type="evidence" value="ECO:0000314"/>
    <property type="project" value="AgBase"/>
</dbReference>
<dbReference type="GO" id="GO:0090263">
    <property type="term" value="P:positive regulation of canonical Wnt signaling pathway"/>
    <property type="evidence" value="ECO:0000318"/>
    <property type="project" value="GO_Central"/>
</dbReference>
<dbReference type="GO" id="GO:0032436">
    <property type="term" value="P:positive regulation of proteasomal ubiquitin-dependent protein catabolic process"/>
    <property type="evidence" value="ECO:0000250"/>
    <property type="project" value="UniProtKB"/>
</dbReference>
<dbReference type="GO" id="GO:0006468">
    <property type="term" value="P:protein phosphorylation"/>
    <property type="evidence" value="ECO:0000250"/>
    <property type="project" value="UniProtKB"/>
</dbReference>
<dbReference type="GO" id="GO:0042752">
    <property type="term" value="P:regulation of circadian rhythm"/>
    <property type="evidence" value="ECO:0000250"/>
    <property type="project" value="UniProtKB"/>
</dbReference>
<dbReference type="GO" id="GO:0007165">
    <property type="term" value="P:signal transduction"/>
    <property type="evidence" value="ECO:0000318"/>
    <property type="project" value="GO_Central"/>
</dbReference>
<dbReference type="GO" id="GO:0051225">
    <property type="term" value="P:spindle assembly"/>
    <property type="evidence" value="ECO:0000318"/>
    <property type="project" value="GO_Central"/>
</dbReference>
<dbReference type="GO" id="GO:0016055">
    <property type="term" value="P:Wnt signaling pathway"/>
    <property type="evidence" value="ECO:0007669"/>
    <property type="project" value="UniProtKB-KW"/>
</dbReference>
<dbReference type="CDD" id="cd14125">
    <property type="entry name" value="STKc_CK1_delta_epsilon"/>
    <property type="match status" value="1"/>
</dbReference>
<dbReference type="FunFam" id="1.10.510.10:FF:000194">
    <property type="entry name" value="Casein kinase I isoform delta"/>
    <property type="match status" value="1"/>
</dbReference>
<dbReference type="FunFam" id="3.30.200.20:FF:000538">
    <property type="entry name" value="Putative Casein kinase I"/>
    <property type="match status" value="1"/>
</dbReference>
<dbReference type="Gene3D" id="1.10.510.10">
    <property type="entry name" value="Transferase(Phosphotransferase) domain 1"/>
    <property type="match status" value="1"/>
</dbReference>
<dbReference type="InterPro" id="IPR050235">
    <property type="entry name" value="CK1_Ser-Thr_kinase"/>
</dbReference>
<dbReference type="InterPro" id="IPR011009">
    <property type="entry name" value="Kinase-like_dom_sf"/>
</dbReference>
<dbReference type="InterPro" id="IPR000719">
    <property type="entry name" value="Prot_kinase_dom"/>
</dbReference>
<dbReference type="InterPro" id="IPR017441">
    <property type="entry name" value="Protein_kinase_ATP_BS"/>
</dbReference>
<dbReference type="InterPro" id="IPR008271">
    <property type="entry name" value="Ser/Thr_kinase_AS"/>
</dbReference>
<dbReference type="PANTHER" id="PTHR11909">
    <property type="entry name" value="CASEIN KINASE-RELATED"/>
    <property type="match status" value="1"/>
</dbReference>
<dbReference type="Pfam" id="PF00069">
    <property type="entry name" value="Pkinase"/>
    <property type="match status" value="1"/>
</dbReference>
<dbReference type="SMART" id="SM00220">
    <property type="entry name" value="S_TKc"/>
    <property type="match status" value="1"/>
</dbReference>
<dbReference type="SUPFAM" id="SSF56112">
    <property type="entry name" value="Protein kinase-like (PK-like)"/>
    <property type="match status" value="1"/>
</dbReference>
<dbReference type="PROSITE" id="PS00107">
    <property type="entry name" value="PROTEIN_KINASE_ATP"/>
    <property type="match status" value="1"/>
</dbReference>
<dbReference type="PROSITE" id="PS50011">
    <property type="entry name" value="PROTEIN_KINASE_DOM"/>
    <property type="match status" value="1"/>
</dbReference>
<dbReference type="PROSITE" id="PS00108">
    <property type="entry name" value="PROTEIN_KINASE_ST"/>
    <property type="match status" value="1"/>
</dbReference>
<name>KC1D_BOVIN</name>
<accession>P35508</accession>
<comment type="function">
    <text evidence="2 4">Essential serine/threonine-protein kinase that regulates diverse cellular growth and survival processes including Wnt signaling, DNA repair and circadian rhythms. It can phosphorylate a large number of proteins. Casein kinases are operationally defined by their preferential utilization of acidic proteins such as caseins as substrates. Phosphorylates connexin-43/GJA1, MAP1A, SNAPIN, MAPT/TAU, TOP2A, DCK, HIF1A, EIF6, p53/TP53, DVL2, DVL3, ESR1, AIB1/NCOA3, DNMT1, PKD2, YAP1, PER1 and PER2. Central component of the circadian clock. In balance with PP1, determines the circadian period length through the regulation of the speed and rhythmicity of PER1 and PER2 phosphorylation. Controls PER1 and PER2 nuclear transport and degradation. YAP1 phosphorylation promotes its SCF(beta-TRCP) E3 ubiquitin ligase-mediated ubiquitination and subsequent degradation. DNMT1 phosphorylation reduces its DNA-binding activity. Phosphorylation of ESR1 and AIB1/NCOA3 stimulates their activity and coactivation. Phosphorylation of DVL2 and DVL3 regulates WNT3A signaling pathway that controls neurite outgrowth. Phosphorylates NEDD9/HEF1 (By similarity). EIF6 phosphorylation promotes its nuclear export. Triggers down-regulation of dopamine receptors in the forebrain. Activates DCK in vitro by phosphorylation. TOP2A phosphorylation favors DNA cleavable complex formation. May regulate the formation of the mitotic spindle apparatus in extravillous trophoblast. Modulates connexin-43/GJA1 gap junction assembly by phosphorylation. Probably involved in lymphocyte physiology. Regulates fast synaptic transmission mediated by glutamate (By similarity).</text>
</comment>
<comment type="catalytic activity">
    <reaction evidence="2">
        <text>L-seryl-[protein] + ATP = O-phospho-L-seryl-[protein] + ADP + H(+)</text>
        <dbReference type="Rhea" id="RHEA:17989"/>
        <dbReference type="Rhea" id="RHEA-COMP:9863"/>
        <dbReference type="Rhea" id="RHEA-COMP:11604"/>
        <dbReference type="ChEBI" id="CHEBI:15378"/>
        <dbReference type="ChEBI" id="CHEBI:29999"/>
        <dbReference type="ChEBI" id="CHEBI:30616"/>
        <dbReference type="ChEBI" id="CHEBI:83421"/>
        <dbReference type="ChEBI" id="CHEBI:456216"/>
        <dbReference type="EC" id="2.7.11.1"/>
    </reaction>
    <physiologicalReaction direction="left-to-right" evidence="2">
        <dbReference type="Rhea" id="RHEA:17990"/>
    </physiologicalReaction>
</comment>
<comment type="catalytic activity">
    <reaction evidence="2">
        <text>L-threonyl-[protein] + ATP = O-phospho-L-threonyl-[protein] + ADP + H(+)</text>
        <dbReference type="Rhea" id="RHEA:46608"/>
        <dbReference type="Rhea" id="RHEA-COMP:11060"/>
        <dbReference type="Rhea" id="RHEA-COMP:11605"/>
        <dbReference type="ChEBI" id="CHEBI:15378"/>
        <dbReference type="ChEBI" id="CHEBI:30013"/>
        <dbReference type="ChEBI" id="CHEBI:30616"/>
        <dbReference type="ChEBI" id="CHEBI:61977"/>
        <dbReference type="ChEBI" id="CHEBI:456216"/>
        <dbReference type="EC" id="2.7.11.1"/>
    </reaction>
    <physiologicalReaction direction="left-to-right" evidence="2">
        <dbReference type="Rhea" id="RHEA:46609"/>
    </physiologicalReaction>
</comment>
<comment type="catalytic activity">
    <reaction evidence="2">
        <text>L-seryl-[tau protein] + ATP = O-phospho-L-seryl-[tau protein] + ADP + H(+)</text>
        <dbReference type="Rhea" id="RHEA:12801"/>
        <dbReference type="Rhea" id="RHEA-COMP:13701"/>
        <dbReference type="Rhea" id="RHEA-COMP:13702"/>
        <dbReference type="ChEBI" id="CHEBI:15378"/>
        <dbReference type="ChEBI" id="CHEBI:29999"/>
        <dbReference type="ChEBI" id="CHEBI:30616"/>
        <dbReference type="ChEBI" id="CHEBI:83421"/>
        <dbReference type="ChEBI" id="CHEBI:456216"/>
        <dbReference type="EC" id="2.7.11.26"/>
    </reaction>
    <physiologicalReaction direction="left-to-right" evidence="2">
        <dbReference type="Rhea" id="RHEA:12802"/>
    </physiologicalReaction>
</comment>
<comment type="catalytic activity">
    <reaction evidence="2">
        <text>L-threonyl-[tau protein] + ATP = O-phospho-L-threonyl-[tau protein] + ADP + H(+)</text>
        <dbReference type="Rhea" id="RHEA:53904"/>
        <dbReference type="Rhea" id="RHEA-COMP:13703"/>
        <dbReference type="Rhea" id="RHEA-COMP:13704"/>
        <dbReference type="ChEBI" id="CHEBI:15378"/>
        <dbReference type="ChEBI" id="CHEBI:30013"/>
        <dbReference type="ChEBI" id="CHEBI:30616"/>
        <dbReference type="ChEBI" id="CHEBI:61977"/>
        <dbReference type="ChEBI" id="CHEBI:456216"/>
        <dbReference type="EC" id="2.7.11.26"/>
    </reaction>
    <physiologicalReaction direction="left-to-right" evidence="2">
        <dbReference type="Rhea" id="RHEA:53905"/>
    </physiologicalReaction>
</comment>
<comment type="activity regulation">
    <text evidence="2">Drug-mediated inhibition leads to a delay of the oscillations with the magnitude of this effect dependent upon the timing of drug administration. Inhibited by phosphorylation (By similarity). Exhibits substrate-dependent heparin activation.</text>
</comment>
<comment type="subunit">
    <text evidence="2 3 4">Monomer (By similarity). Component of the circadian core oscillator, which includes the CRY proteins, CLOCK, or NPAS2, ARTNL/BMAL1 or ARTNL2/BMAL2, CSNK1D and/or CSNK1E, TIMELESS and the PER proteins (By similarity). Interacts with DNMT1 and MAP1A (By similarity). Interacts directly with PER1 and PER2 which may lead to their degradation (By similarity). Interacts with MAPT/TAU, SNAPIN, DBNDD2, AIB1/NCOA3 and ESR1 (By similarity). Interacts with AKAP9/AKAP450; this interaction promotes centrosomal subcellular location (By similarity). Binds to tubulins in mitotic cells upon DNA damage (By similarity). Interacts with GJA1 (By similarity). Interacts with DDX3X; this interaction enhances CSNK1D kinase activity in vitro, but it is unclear whether this interaction is physiologically relevant (By similarity). Interacts with FAM83A, FAM83B, FAM83E and FAM83H (via DUF1669) (By similarity).</text>
</comment>
<comment type="subcellular location">
    <subcellularLocation>
        <location>Cytoplasm</location>
    </subcellularLocation>
    <subcellularLocation>
        <location evidence="1">Nucleus</location>
    </subcellularLocation>
    <subcellularLocation>
        <location evidence="1">Cytoplasm</location>
        <location evidence="1">Cytoskeleton</location>
        <location evidence="1">Microtubule organizing center</location>
        <location evidence="1">Centrosome</location>
    </subcellularLocation>
    <subcellularLocation>
        <location evidence="1">Cytoplasm</location>
        <location evidence="1">Perinuclear region</location>
    </subcellularLocation>
    <subcellularLocation>
        <location evidence="1">Cell membrane</location>
    </subcellularLocation>
    <subcellularLocation>
        <location evidence="1">Cytoplasm</location>
        <location evidence="1">Cytoskeleton</location>
        <location evidence="1">Spindle</location>
    </subcellularLocation>
    <subcellularLocation>
        <location evidence="1">Golgi apparatus</location>
    </subcellularLocation>
    <text evidence="1">Localized at mitotic spindle microtubules, and at the centrosomes and interphase in interphase cells. Recruited to the spindle apparatus and the centrosomes in response to DNA-damage. Correct subcellular localization requires kinase activity (By similarity).</text>
</comment>
<comment type="PTM">
    <text evidence="1">Autophosphorylated on serine and threonine residues; this autophosphorylation represses activity. Reactivated by phosphatase-mediated dephosphorylation. May be dephosphorylated by PP1 (By similarity).</text>
</comment>
<comment type="similarity">
    <text evidence="8">Belongs to the protein kinase superfamily. CK1 Ser/Thr protein kinase family. Casein kinase I subfamily.</text>
</comment>
<keyword id="KW-0067">ATP-binding</keyword>
<keyword id="KW-0090">Biological rhythms</keyword>
<keyword id="KW-1003">Cell membrane</keyword>
<keyword id="KW-0963">Cytoplasm</keyword>
<keyword id="KW-0206">Cytoskeleton</keyword>
<keyword id="KW-0333">Golgi apparatus</keyword>
<keyword id="KW-0418">Kinase</keyword>
<keyword id="KW-0472">Membrane</keyword>
<keyword id="KW-0488">Methylation</keyword>
<keyword id="KW-0547">Nucleotide-binding</keyword>
<keyword id="KW-0539">Nucleus</keyword>
<keyword id="KW-0597">Phosphoprotein</keyword>
<keyword id="KW-1185">Reference proteome</keyword>
<keyword id="KW-0723">Serine/threonine-protein kinase</keyword>
<keyword id="KW-0808">Transferase</keyword>
<keyword id="KW-0879">Wnt signaling pathway</keyword>
<organism>
    <name type="scientific">Bos taurus</name>
    <name type="common">Bovine</name>
    <dbReference type="NCBI Taxonomy" id="9913"/>
    <lineage>
        <taxon>Eukaryota</taxon>
        <taxon>Metazoa</taxon>
        <taxon>Chordata</taxon>
        <taxon>Craniata</taxon>
        <taxon>Vertebrata</taxon>
        <taxon>Euteleostomi</taxon>
        <taxon>Mammalia</taxon>
        <taxon>Eutheria</taxon>
        <taxon>Laurasiatheria</taxon>
        <taxon>Artiodactyla</taxon>
        <taxon>Ruminantia</taxon>
        <taxon>Pecora</taxon>
        <taxon>Bovidae</taxon>
        <taxon>Bovinae</taxon>
        <taxon>Bos</taxon>
    </lineage>
</organism>
<proteinExistence type="evidence at transcript level"/>
<evidence type="ECO:0000250" key="1"/>
<evidence type="ECO:0000250" key="2">
    <source>
        <dbReference type="UniProtKB" id="P48730"/>
    </source>
</evidence>
<evidence type="ECO:0000250" key="3">
    <source>
        <dbReference type="UniProtKB" id="Q06486"/>
    </source>
</evidence>
<evidence type="ECO:0000250" key="4">
    <source>
        <dbReference type="UniProtKB" id="Q9DC28"/>
    </source>
</evidence>
<evidence type="ECO:0000255" key="5">
    <source>
        <dbReference type="PROSITE-ProRule" id="PRU00159"/>
    </source>
</evidence>
<evidence type="ECO:0000255" key="6">
    <source>
        <dbReference type="PROSITE-ProRule" id="PRU10027"/>
    </source>
</evidence>
<evidence type="ECO:0000256" key="7">
    <source>
        <dbReference type="SAM" id="MobiDB-lite"/>
    </source>
</evidence>
<evidence type="ECO:0000305" key="8"/>
<gene>
    <name type="primary">CSNK1D</name>
    <name type="synonym">HCKID</name>
</gene>
<sequence length="415" mass="47330">MELRVGNRYRLGRKIGSGSFGDIYLGTDIAAGEEVAIKLECVKTKHPQLHIESKIYKMMQGGVGIPTIRWCGAEGDYNVMVMELLGPSLEDLFNFCSRKFSLKTVLLLADQMISRIEYIHSKNFIHRDVKPDNFLMGLGKKGNLVYIIDFGLAKKYRDARTHQHIPYRENKNLTGTARYASINTHLGIEQSRRDDLESLGYVLMYFNLGSLPWQGLKAATKRQKYERISEKKMSTPIEVLCKGYPSEFATYLNFCRSLRFDDKPDYSYLRQLFRNLFHRQGFSYDYVFDWNMLKFGASRAADDAERERRDREERLRHSRNPATRGLPSTASGRLRGTQEVAPPTPLTPTSHTANTSPRPVSGMERERKVSMRLHRGAPVNISSSDLTGRQDTSRMSTSQIPGRVASSGLQSVVHR</sequence>
<protein>
    <recommendedName>
        <fullName>Casein kinase I isoform delta</fullName>
        <shortName>CKI-delta</shortName>
        <shortName>CKId</shortName>
        <ecNumber evidence="2">2.7.11.1</ecNumber>
    </recommendedName>
    <alternativeName>
        <fullName>Tau-protein kinase CSNK1D</fullName>
        <ecNumber evidence="2">2.7.11.26</ecNumber>
    </alternativeName>
</protein>
<feature type="chain" id="PRO_0000192832" description="Casein kinase I isoform delta">
    <location>
        <begin position="1"/>
        <end position="415"/>
    </location>
</feature>
<feature type="domain" description="Protein kinase" evidence="5">
    <location>
        <begin position="9"/>
        <end position="277"/>
    </location>
</feature>
<feature type="region of interest" description="Centrosomal localization signal (CLS)" evidence="1">
    <location>
        <begin position="278"/>
        <end position="364"/>
    </location>
</feature>
<feature type="region of interest" description="Disordered" evidence="7">
    <location>
        <begin position="301"/>
        <end position="415"/>
    </location>
</feature>
<feature type="region of interest" description="Autoinhibitory" evidence="1">
    <location>
        <begin position="317"/>
        <end position="342"/>
    </location>
</feature>
<feature type="compositionally biased region" description="Basic and acidic residues" evidence="7">
    <location>
        <begin position="301"/>
        <end position="315"/>
    </location>
</feature>
<feature type="compositionally biased region" description="Polar residues" evidence="7">
    <location>
        <begin position="347"/>
        <end position="358"/>
    </location>
</feature>
<feature type="compositionally biased region" description="Polar residues" evidence="7">
    <location>
        <begin position="380"/>
        <end position="400"/>
    </location>
</feature>
<feature type="active site" description="Proton acceptor" evidence="5 6">
    <location>
        <position position="128"/>
    </location>
</feature>
<feature type="binding site" evidence="5">
    <location>
        <begin position="15"/>
        <end position="23"/>
    </location>
    <ligand>
        <name>ATP</name>
        <dbReference type="ChEBI" id="CHEBI:30616"/>
    </ligand>
</feature>
<feature type="binding site" evidence="5">
    <location>
        <position position="38"/>
    </location>
    <ligand>
        <name>ATP</name>
        <dbReference type="ChEBI" id="CHEBI:30616"/>
    </ligand>
</feature>
<feature type="modified residue" description="Phosphoserine" evidence="2">
    <location>
        <position position="328"/>
    </location>
</feature>
<feature type="modified residue" description="Phosphoserine" evidence="2">
    <location>
        <position position="331"/>
    </location>
</feature>
<feature type="modified residue" description="Phosphoserine" evidence="3">
    <location>
        <position position="370"/>
    </location>
</feature>
<feature type="modified residue" description="Omega-N-methylarginine" evidence="4">
    <location>
        <position position="375"/>
    </location>
</feature>
<feature type="modified residue" description="Phosphoserine" evidence="2">
    <location>
        <position position="382"/>
    </location>
</feature>
<feature type="modified residue" description="Phosphoserine" evidence="2">
    <location>
        <position position="383"/>
    </location>
</feature>
<feature type="modified residue" description="Phosphoserine" evidence="2">
    <location>
        <position position="384"/>
    </location>
</feature>
<feature type="modified residue" description="Phosphoserine" evidence="2">
    <location>
        <position position="407"/>
    </location>
</feature>
<feature type="modified residue" description="Phosphoserine" evidence="2">
    <location>
        <position position="411"/>
    </location>
</feature>
<reference key="1">
    <citation type="journal article" date="2009" name="Science">
        <title>The genome sequence of taurine cattle: a window to ruminant biology and evolution.</title>
        <authorList>
            <consortium name="The bovine genome sequencing and analysis consortium"/>
        </authorList>
    </citation>
    <scope>NUCLEOTIDE SEQUENCE [LARGE SCALE GENOMIC DNA]</scope>
    <source>
        <strain>Hereford</strain>
    </source>
</reference>
<reference key="2">
    <citation type="journal article" date="1991" name="Proc. Natl. Acad. Sci. U.S.A.">
        <title>Purification of casein kinase I and isolation of cDNAs encoding multiple casein kinase I-like enzymes.</title>
        <authorList>
            <person name="Rowles J."/>
            <person name="Slaughter C."/>
            <person name="Moomaw C."/>
            <person name="Hsu J."/>
            <person name="Cobb M.H."/>
        </authorList>
    </citation>
    <scope>NUCLEOTIDE SEQUENCE [MRNA] OF 137-178</scope>
    <source>
        <tissue>Brain</tissue>
    </source>
</reference>